<comment type="function">
    <text evidence="1">Catalyzes the phosphorylation of N-acetylmannosamine (ManNAc) to ManNAc-6-P.</text>
</comment>
<comment type="catalytic activity">
    <reaction evidence="1">
        <text>an N-acyl-D-mannosamine + ATP = an N-acyl-D-mannosamine 6-phosphate + ADP + H(+)</text>
        <dbReference type="Rhea" id="RHEA:23832"/>
        <dbReference type="ChEBI" id="CHEBI:15378"/>
        <dbReference type="ChEBI" id="CHEBI:16062"/>
        <dbReference type="ChEBI" id="CHEBI:30616"/>
        <dbReference type="ChEBI" id="CHEBI:57666"/>
        <dbReference type="ChEBI" id="CHEBI:456216"/>
        <dbReference type="EC" id="2.7.1.60"/>
    </reaction>
</comment>
<comment type="pathway">
    <text evidence="1">Amino-sugar metabolism; N-acetylneuraminate degradation; D-fructose 6-phosphate from N-acetylneuraminate: step 2/5.</text>
</comment>
<comment type="subunit">
    <text evidence="1">Homodimer.</text>
</comment>
<comment type="similarity">
    <text evidence="1">Belongs to the ROK (NagC/XylR) family. NanK subfamily.</text>
</comment>
<accession>A4TMJ3</accession>
<dbReference type="EC" id="2.7.1.60" evidence="1"/>
<dbReference type="EMBL" id="CP000668">
    <property type="protein sequence ID" value="ABP40505.1"/>
    <property type="molecule type" value="Genomic_DNA"/>
</dbReference>
<dbReference type="RefSeq" id="WP_011906319.1">
    <property type="nucleotide sequence ID" value="NZ_CP009715.1"/>
</dbReference>
<dbReference type="SMR" id="A4TMJ3"/>
<dbReference type="KEGG" id="ypp:YPDSF_2126"/>
<dbReference type="PATRIC" id="fig|386656.14.peg.3603"/>
<dbReference type="UniPathway" id="UPA00629">
    <property type="reaction ID" value="UER00681"/>
</dbReference>
<dbReference type="GO" id="GO:0005524">
    <property type="term" value="F:ATP binding"/>
    <property type="evidence" value="ECO:0007669"/>
    <property type="project" value="UniProtKB-UniRule"/>
</dbReference>
<dbReference type="GO" id="GO:0009384">
    <property type="term" value="F:N-acylmannosamine kinase activity"/>
    <property type="evidence" value="ECO:0007669"/>
    <property type="project" value="UniProtKB-UniRule"/>
</dbReference>
<dbReference type="GO" id="GO:0008270">
    <property type="term" value="F:zinc ion binding"/>
    <property type="evidence" value="ECO:0007669"/>
    <property type="project" value="UniProtKB-UniRule"/>
</dbReference>
<dbReference type="GO" id="GO:0019262">
    <property type="term" value="P:N-acetylneuraminate catabolic process"/>
    <property type="evidence" value="ECO:0007669"/>
    <property type="project" value="UniProtKB-UniRule"/>
</dbReference>
<dbReference type="CDD" id="cd24069">
    <property type="entry name" value="ASKHA_NBD_ROK_EcNanK-like"/>
    <property type="match status" value="1"/>
</dbReference>
<dbReference type="FunFam" id="3.30.420.40:FF:000063">
    <property type="entry name" value="N-acetylmannosamine kinase"/>
    <property type="match status" value="1"/>
</dbReference>
<dbReference type="Gene3D" id="3.30.420.40">
    <property type="match status" value="2"/>
</dbReference>
<dbReference type="HAMAP" id="MF_01234">
    <property type="entry name" value="ManNAc_kinase"/>
    <property type="match status" value="1"/>
</dbReference>
<dbReference type="InterPro" id="IPR043129">
    <property type="entry name" value="ATPase_NBD"/>
</dbReference>
<dbReference type="InterPro" id="IPR023945">
    <property type="entry name" value="ManNAc_kinase_bac"/>
</dbReference>
<dbReference type="InterPro" id="IPR000600">
    <property type="entry name" value="ROK"/>
</dbReference>
<dbReference type="InterPro" id="IPR049874">
    <property type="entry name" value="ROK_cs"/>
</dbReference>
<dbReference type="NCBIfam" id="NF003461">
    <property type="entry name" value="PRK05082.1"/>
    <property type="match status" value="1"/>
</dbReference>
<dbReference type="PANTHER" id="PTHR18964:SF169">
    <property type="entry name" value="N-ACETYLMANNOSAMINE KINASE"/>
    <property type="match status" value="1"/>
</dbReference>
<dbReference type="PANTHER" id="PTHR18964">
    <property type="entry name" value="ROK (REPRESSOR, ORF, KINASE) FAMILY"/>
    <property type="match status" value="1"/>
</dbReference>
<dbReference type="Pfam" id="PF00480">
    <property type="entry name" value="ROK"/>
    <property type="match status" value="1"/>
</dbReference>
<dbReference type="SUPFAM" id="SSF53067">
    <property type="entry name" value="Actin-like ATPase domain"/>
    <property type="match status" value="1"/>
</dbReference>
<dbReference type="PROSITE" id="PS01125">
    <property type="entry name" value="ROK"/>
    <property type="match status" value="1"/>
</dbReference>
<protein>
    <recommendedName>
        <fullName evidence="1">N-acetylmannosamine kinase</fullName>
        <ecNumber evidence="1">2.7.1.60</ecNumber>
    </recommendedName>
    <alternativeName>
        <fullName evidence="1">ManNAc kinase</fullName>
    </alternativeName>
    <alternativeName>
        <fullName evidence="1">N-acetyl-D-mannosamine kinase</fullName>
    </alternativeName>
</protein>
<keyword id="KW-0067">ATP-binding</keyword>
<keyword id="KW-0119">Carbohydrate metabolism</keyword>
<keyword id="KW-0418">Kinase</keyword>
<keyword id="KW-0479">Metal-binding</keyword>
<keyword id="KW-0547">Nucleotide-binding</keyword>
<keyword id="KW-0808">Transferase</keyword>
<keyword id="KW-0862">Zinc</keyword>
<evidence type="ECO:0000255" key="1">
    <source>
        <dbReference type="HAMAP-Rule" id="MF_01234"/>
    </source>
</evidence>
<sequence>MGKGLALDIGGTKIAVAVVTESGMLIGRQQIATPRGGAGQLAAALETLIAPYRHQVDFIAVASTGIISGGRLTALNPANLGGLADFPLYDCIRSISDLPCVLLNDGQAAAWAEYQALGDKNDNMMFVTVSTGVGGGIILNKKLLVGQRGLAGHIGHTLSDPHGVLCGCGRRGCVESVASGTAIGAETLGWKQPVSAATVFDMAQQGDAQAGKVINRSAAAIAQMLADMKMALDLEVVILGGSVGLAVGYLERVVAAQKTLPGIYRVPVQEAHHRQDSGLLGAALWARTSL</sequence>
<organism>
    <name type="scientific">Yersinia pestis (strain Pestoides F)</name>
    <dbReference type="NCBI Taxonomy" id="386656"/>
    <lineage>
        <taxon>Bacteria</taxon>
        <taxon>Pseudomonadati</taxon>
        <taxon>Pseudomonadota</taxon>
        <taxon>Gammaproteobacteria</taxon>
        <taxon>Enterobacterales</taxon>
        <taxon>Yersiniaceae</taxon>
        <taxon>Yersinia</taxon>
    </lineage>
</organism>
<name>NANK_YERPP</name>
<proteinExistence type="inferred from homology"/>
<feature type="chain" id="PRO_0000301464" description="N-acetylmannosamine kinase">
    <location>
        <begin position="1"/>
        <end position="290"/>
    </location>
</feature>
<feature type="binding site" evidence="1">
    <location>
        <begin position="6"/>
        <end position="13"/>
    </location>
    <ligand>
        <name>ATP</name>
        <dbReference type="ChEBI" id="CHEBI:30616"/>
    </ligand>
</feature>
<feature type="binding site" evidence="1">
    <location>
        <begin position="132"/>
        <end position="139"/>
    </location>
    <ligand>
        <name>ATP</name>
        <dbReference type="ChEBI" id="CHEBI:30616"/>
    </ligand>
</feature>
<feature type="binding site" evidence="1">
    <location>
        <position position="156"/>
    </location>
    <ligand>
        <name>Zn(2+)</name>
        <dbReference type="ChEBI" id="CHEBI:29105"/>
    </ligand>
</feature>
<feature type="binding site" evidence="1">
    <location>
        <position position="166"/>
    </location>
    <ligand>
        <name>Zn(2+)</name>
        <dbReference type="ChEBI" id="CHEBI:29105"/>
    </ligand>
</feature>
<feature type="binding site" evidence="1">
    <location>
        <position position="168"/>
    </location>
    <ligand>
        <name>Zn(2+)</name>
        <dbReference type="ChEBI" id="CHEBI:29105"/>
    </ligand>
</feature>
<feature type="binding site" evidence="1">
    <location>
        <position position="173"/>
    </location>
    <ligand>
        <name>Zn(2+)</name>
        <dbReference type="ChEBI" id="CHEBI:29105"/>
    </ligand>
</feature>
<gene>
    <name evidence="1" type="primary">nanK</name>
    <name type="ordered locus">YPDSF_2126</name>
</gene>
<reference key="1">
    <citation type="submission" date="2007-02" db="EMBL/GenBank/DDBJ databases">
        <title>Complete sequence of chromosome of Yersinia pestis Pestoides F.</title>
        <authorList>
            <consortium name="US DOE Joint Genome Institute"/>
            <person name="Copeland A."/>
            <person name="Lucas S."/>
            <person name="Lapidus A."/>
            <person name="Barry K."/>
            <person name="Detter J.C."/>
            <person name="Glavina del Rio T."/>
            <person name="Hammon N."/>
            <person name="Israni S."/>
            <person name="Dalin E."/>
            <person name="Tice H."/>
            <person name="Pitluck S."/>
            <person name="Di Bartolo G."/>
            <person name="Chain P."/>
            <person name="Malfatti S."/>
            <person name="Shin M."/>
            <person name="Vergez L."/>
            <person name="Schmutz J."/>
            <person name="Larimer F."/>
            <person name="Land M."/>
            <person name="Hauser L."/>
            <person name="Worsham P."/>
            <person name="Chu M."/>
            <person name="Bearden S."/>
            <person name="Garcia E."/>
            <person name="Richardson P."/>
        </authorList>
    </citation>
    <scope>NUCLEOTIDE SEQUENCE [LARGE SCALE GENOMIC DNA]</scope>
    <source>
        <strain>Pestoides F</strain>
    </source>
</reference>